<gene>
    <name evidence="1" type="primary">HCR1</name>
    <name type="ORF">PGUG_02970</name>
</gene>
<reference key="1">
    <citation type="journal article" date="2009" name="Nature">
        <title>Evolution of pathogenicity and sexual reproduction in eight Candida genomes.</title>
        <authorList>
            <person name="Butler G."/>
            <person name="Rasmussen M.D."/>
            <person name="Lin M.F."/>
            <person name="Santos M.A.S."/>
            <person name="Sakthikumar S."/>
            <person name="Munro C.A."/>
            <person name="Rheinbay E."/>
            <person name="Grabherr M."/>
            <person name="Forche A."/>
            <person name="Reedy J.L."/>
            <person name="Agrafioti I."/>
            <person name="Arnaud M.B."/>
            <person name="Bates S."/>
            <person name="Brown A.J.P."/>
            <person name="Brunke S."/>
            <person name="Costanzo M.C."/>
            <person name="Fitzpatrick D.A."/>
            <person name="de Groot P.W.J."/>
            <person name="Harris D."/>
            <person name="Hoyer L.L."/>
            <person name="Hube B."/>
            <person name="Klis F.M."/>
            <person name="Kodira C."/>
            <person name="Lennard N."/>
            <person name="Logue M.E."/>
            <person name="Martin R."/>
            <person name="Neiman A.M."/>
            <person name="Nikolaou E."/>
            <person name="Quail M.A."/>
            <person name="Quinn J."/>
            <person name="Santos M.C."/>
            <person name="Schmitzberger F.F."/>
            <person name="Sherlock G."/>
            <person name="Shah P."/>
            <person name="Silverstein K.A.T."/>
            <person name="Skrzypek M.S."/>
            <person name="Soll D."/>
            <person name="Staggs R."/>
            <person name="Stansfield I."/>
            <person name="Stumpf M.P.H."/>
            <person name="Sudbery P.E."/>
            <person name="Srikantha T."/>
            <person name="Zeng Q."/>
            <person name="Berman J."/>
            <person name="Berriman M."/>
            <person name="Heitman J."/>
            <person name="Gow N.A.R."/>
            <person name="Lorenz M.C."/>
            <person name="Birren B.W."/>
            <person name="Kellis M."/>
            <person name="Cuomo C.A."/>
        </authorList>
    </citation>
    <scope>NUCLEOTIDE SEQUENCE [LARGE SCALE GENOMIC DNA]</scope>
    <source>
        <strain>ATCC 6260 / CBS 566 / DSM 6381 / JCM 1539 / NBRC 10279 / NRRL Y-324</strain>
    </source>
</reference>
<dbReference type="EMBL" id="CH408157">
    <property type="protein sequence ID" value="EDK38872.2"/>
    <property type="status" value="ALT_INIT"/>
    <property type="molecule type" value="Genomic_DNA"/>
</dbReference>
<dbReference type="RefSeq" id="XP_001485241.1">
    <property type="nucleotide sequence ID" value="XM_001485191.1"/>
</dbReference>
<dbReference type="SMR" id="A5DI69"/>
<dbReference type="FunCoup" id="A5DI69">
    <property type="interactions" value="103"/>
</dbReference>
<dbReference type="STRING" id="294746.A5DI69"/>
<dbReference type="GeneID" id="5127223"/>
<dbReference type="KEGG" id="pgu:PGUG_02970"/>
<dbReference type="eggNOG" id="KOG4813">
    <property type="taxonomic scope" value="Eukaryota"/>
</dbReference>
<dbReference type="HOGENOM" id="CLU_085412_0_0_1"/>
<dbReference type="InParanoid" id="A5DI69"/>
<dbReference type="OrthoDB" id="20381at2759"/>
<dbReference type="Proteomes" id="UP000001997">
    <property type="component" value="Unassembled WGS sequence"/>
</dbReference>
<dbReference type="GO" id="GO:0016282">
    <property type="term" value="C:eukaryotic 43S preinitiation complex"/>
    <property type="evidence" value="ECO:0007669"/>
    <property type="project" value="UniProtKB-UniRule"/>
</dbReference>
<dbReference type="GO" id="GO:0033290">
    <property type="term" value="C:eukaryotic 48S preinitiation complex"/>
    <property type="evidence" value="ECO:0007669"/>
    <property type="project" value="UniProtKB-UniRule"/>
</dbReference>
<dbReference type="GO" id="GO:0005852">
    <property type="term" value="C:eukaryotic translation initiation factor 3 complex"/>
    <property type="evidence" value="ECO:0007669"/>
    <property type="project" value="UniProtKB-UniRule"/>
</dbReference>
<dbReference type="GO" id="GO:0003743">
    <property type="term" value="F:translation initiation factor activity"/>
    <property type="evidence" value="ECO:0007669"/>
    <property type="project" value="UniProtKB-UniRule"/>
</dbReference>
<dbReference type="GO" id="GO:0001732">
    <property type="term" value="P:formation of cytoplasmic translation initiation complex"/>
    <property type="evidence" value="ECO:0007669"/>
    <property type="project" value="UniProtKB-UniRule"/>
</dbReference>
<dbReference type="Gene3D" id="1.10.246.60">
    <property type="entry name" value="Eukaryotic translation initiation factor 3 like domains"/>
    <property type="match status" value="1"/>
</dbReference>
<dbReference type="HAMAP" id="MF_03009">
    <property type="entry name" value="eIF3j"/>
    <property type="match status" value="1"/>
</dbReference>
<dbReference type="InterPro" id="IPR023194">
    <property type="entry name" value="eIF3-like_dom_sf"/>
</dbReference>
<dbReference type="InterPro" id="IPR013906">
    <property type="entry name" value="eIF3j"/>
</dbReference>
<dbReference type="PANTHER" id="PTHR21681">
    <property type="entry name" value="EUKARYOTIC TRANSLATION INITIATION FACTOR 3 SUBUNIT J"/>
    <property type="match status" value="1"/>
</dbReference>
<dbReference type="PANTHER" id="PTHR21681:SF0">
    <property type="entry name" value="EUKARYOTIC TRANSLATION INITIATION FACTOR 3 SUBUNIT J"/>
    <property type="match status" value="1"/>
</dbReference>
<dbReference type="Pfam" id="PF08597">
    <property type="entry name" value="eIF3_subunit"/>
    <property type="match status" value="1"/>
</dbReference>
<accession>A5DI69</accession>
<name>EIF3J_PICGU</name>
<proteinExistence type="inferred from homology"/>
<feature type="chain" id="PRO_0000366907" description="Eukaryotic translation initiation factor 3 subunit J">
    <location>
        <begin position="1"/>
        <end position="279"/>
    </location>
</feature>
<feature type="region of interest" description="Disordered" evidence="2">
    <location>
        <begin position="1"/>
        <end position="74"/>
    </location>
</feature>
<feature type="region of interest" description="Disordered" evidence="2">
    <location>
        <begin position="229"/>
        <end position="279"/>
    </location>
</feature>
<feature type="coiled-coil region" evidence="1">
    <location>
        <begin position="34"/>
        <end position="74"/>
    </location>
</feature>
<feature type="compositionally biased region" description="Acidic residues" evidence="2">
    <location>
        <begin position="20"/>
        <end position="39"/>
    </location>
</feature>
<feature type="compositionally biased region" description="Basic and acidic residues" evidence="2">
    <location>
        <begin position="40"/>
        <end position="67"/>
    </location>
</feature>
<feature type="compositionally biased region" description="Acidic residues" evidence="2">
    <location>
        <begin position="268"/>
        <end position="279"/>
    </location>
</feature>
<sequence>MSWDDDDFDVPATKTAGVSWEDEDNDDPLLESWDIDEEEVARKKKEEEAKKKAEKEALKQKQQEAKNKKLSQKSGERKLLDIDLIDEETRQELLRKAQVTSDLNNAADLFGGLGVANDDDFDVNEHPRERAAKLAAAKQAAKPAAPRLTRDSPLEMHPLFQPTDKAEYEKLRKALATSLQQLAEDSPLNYSSALGIDLIRDAAQPLSLENVRKVISTLNVIVKDKERAERQARLKKAGGTATGGAGKKKAKPAVKTNVSDMYKKDAGDDFDDFDDDDFM</sequence>
<organism>
    <name type="scientific">Meyerozyma guilliermondii (strain ATCC 6260 / CBS 566 / DSM 6381 / JCM 1539 / NBRC 10279 / NRRL Y-324)</name>
    <name type="common">Yeast</name>
    <name type="synonym">Candida guilliermondii</name>
    <dbReference type="NCBI Taxonomy" id="294746"/>
    <lineage>
        <taxon>Eukaryota</taxon>
        <taxon>Fungi</taxon>
        <taxon>Dikarya</taxon>
        <taxon>Ascomycota</taxon>
        <taxon>Saccharomycotina</taxon>
        <taxon>Pichiomycetes</taxon>
        <taxon>Debaryomycetaceae</taxon>
        <taxon>Meyerozyma</taxon>
    </lineage>
</organism>
<evidence type="ECO:0000255" key="1">
    <source>
        <dbReference type="HAMAP-Rule" id="MF_03009"/>
    </source>
</evidence>
<evidence type="ECO:0000256" key="2">
    <source>
        <dbReference type="SAM" id="MobiDB-lite"/>
    </source>
</evidence>
<evidence type="ECO:0000305" key="3"/>
<comment type="function">
    <text evidence="1">Component of the eukaryotic translation initiation factor 3 (eIF-3) complex, which is involved in protein synthesis of a specialized repertoire of mRNAs and, together with other initiation factors, stimulates binding of mRNA and methionyl-tRNAi to the 40S ribosome. The eIF-3 complex specifically targets and initiates translation of a subset of mRNAs involved in cell proliferation.</text>
</comment>
<comment type="subunit">
    <text evidence="1">Component of the eukaryotic translation initiation factor 3 (eIF-3) complex.</text>
</comment>
<comment type="subcellular location">
    <subcellularLocation>
        <location evidence="1">Cytoplasm</location>
    </subcellularLocation>
</comment>
<comment type="similarity">
    <text evidence="1">Belongs to the eIF-3 subunit J family.</text>
</comment>
<comment type="sequence caution" evidence="3">
    <conflict type="erroneous initiation">
        <sequence resource="EMBL-CDS" id="EDK38872"/>
    </conflict>
</comment>
<keyword id="KW-0175">Coiled coil</keyword>
<keyword id="KW-0963">Cytoplasm</keyword>
<keyword id="KW-0396">Initiation factor</keyword>
<keyword id="KW-0648">Protein biosynthesis</keyword>
<keyword id="KW-1185">Reference proteome</keyword>
<protein>
    <recommendedName>
        <fullName evidence="1">Eukaryotic translation initiation factor 3 subunit J</fullName>
        <shortName evidence="1">eIF3j</shortName>
    </recommendedName>
    <alternativeName>
        <fullName evidence="1">Eukaryotic translation initiation factor 3 30 kDa subunit homolog</fullName>
        <shortName evidence="1">eIF-3 30 kDa subunit homolog</shortName>
    </alternativeName>
</protein>